<reference key="1">
    <citation type="journal article" date="2005" name="BMC Genomics">
        <title>Characterization of 954 bovine full-CDS cDNA sequences.</title>
        <authorList>
            <person name="Harhay G.P."/>
            <person name="Sonstegard T.S."/>
            <person name="Keele J.W."/>
            <person name="Heaton M.P."/>
            <person name="Clawson M.L."/>
            <person name="Snelling W.M."/>
            <person name="Wiedmann R.T."/>
            <person name="Van Tassell C.P."/>
            <person name="Smith T.P.L."/>
        </authorList>
    </citation>
    <scope>NUCLEOTIDE SEQUENCE [LARGE SCALE MRNA]</scope>
</reference>
<reference key="2">
    <citation type="submission" date="2005-08" db="EMBL/GenBank/DDBJ databases">
        <authorList>
            <consortium name="NIH - Mammalian Gene Collection (MGC) project"/>
        </authorList>
    </citation>
    <scope>NUCLEOTIDE SEQUENCE [LARGE SCALE MRNA]</scope>
    <source>
        <strain>Crossbred X Angus</strain>
        <tissue>Ileum</tissue>
    </source>
</reference>
<keyword id="KW-1015">Disulfide bond</keyword>
<keyword id="KW-0245">EGF-like domain</keyword>
<keyword id="KW-0325">Glycoprotein</keyword>
<keyword id="KW-0326">Glycosidase</keyword>
<keyword id="KW-0378">Hydrolase</keyword>
<keyword id="KW-0458">Lysosome</keyword>
<keyword id="KW-1185">Reference proteome</keyword>
<keyword id="KW-0964">Secreted</keyword>
<keyword id="KW-0732">Signal</keyword>
<proteinExistence type="evidence at transcript level"/>
<feature type="signal peptide" evidence="2">
    <location>
        <begin position="1"/>
        <end position="35"/>
    </location>
</feature>
<feature type="chain" id="PRO_0000042623" description="Hyaluronidase-1">
    <location>
        <begin position="36"/>
        <end position="450"/>
    </location>
</feature>
<feature type="domain" description="EGF-like">
    <location>
        <begin position="433"/>
        <end position="444"/>
    </location>
</feature>
<feature type="active site" description="Proton donor" evidence="1">
    <location>
        <position position="146"/>
    </location>
</feature>
<feature type="glycosylation site" description="N-linked (GlcNAc...) asparagine" evidence="2">
    <location>
        <position position="85"/>
    </location>
</feature>
<feature type="glycosylation site" description="N-linked (GlcNAc...) asparagine" evidence="2">
    <location>
        <position position="231"/>
    </location>
</feature>
<feature type="glycosylation site" description="N-linked (GlcNAc...) asparagine" evidence="2">
    <location>
        <position position="365"/>
    </location>
</feature>
<feature type="glycosylation site" description="N-linked (GlcNAc...) asparagine" evidence="2">
    <location>
        <position position="398"/>
    </location>
</feature>
<feature type="disulfide bond" evidence="1">
    <location>
        <begin position="58"/>
        <end position="348"/>
    </location>
</feature>
<feature type="disulfide bond" evidence="1">
    <location>
        <begin position="222"/>
        <end position="236"/>
    </location>
</feature>
<feature type="disulfide bond" evidence="1">
    <location>
        <begin position="373"/>
        <end position="384"/>
    </location>
</feature>
<feature type="disulfide bond" evidence="1">
    <location>
        <begin position="378"/>
        <end position="433"/>
    </location>
</feature>
<feature type="disulfide bond" evidence="1">
    <location>
        <begin position="435"/>
        <end position="444"/>
    </location>
</feature>
<feature type="sequence conflict" description="In Ref. 2; AAI02474." evidence="3" ref="2">
    <original>V</original>
    <variation>L</variation>
    <location>
        <position position="333"/>
    </location>
</feature>
<feature type="sequence conflict" description="In Ref. 2; AAI02474." evidence="3" ref="2">
    <original>M</original>
    <variation>L</variation>
    <location>
        <position position="449"/>
    </location>
</feature>
<organism>
    <name type="scientific">Bos taurus</name>
    <name type="common">Bovine</name>
    <dbReference type="NCBI Taxonomy" id="9913"/>
    <lineage>
        <taxon>Eukaryota</taxon>
        <taxon>Metazoa</taxon>
        <taxon>Chordata</taxon>
        <taxon>Craniata</taxon>
        <taxon>Vertebrata</taxon>
        <taxon>Euteleostomi</taxon>
        <taxon>Mammalia</taxon>
        <taxon>Eutheria</taxon>
        <taxon>Laurasiatheria</taxon>
        <taxon>Artiodactyla</taxon>
        <taxon>Ruminantia</taxon>
        <taxon>Pecora</taxon>
        <taxon>Bovidae</taxon>
        <taxon>Bovinae</taxon>
        <taxon>Bos</taxon>
    </lineage>
</organism>
<gene>
    <name type="primary">HYAL1</name>
</gene>
<name>HYAL1_BOVIN</name>
<sequence>MRPFSLEVSLHLPWAMAAHLLPVCTLFLNLLSMTQGSRDPVVPNQPFTTIWNANTEWCMKKHGVDVDISIFDVVTNPGQTFRGPNMTIFYSSQLGTYPYYTSAGEPVFGGLPQNASLNAHLARTFQDILAAMPEPRFSGLAVIDWEAWRPRWAFNWDTKDIYRQRSRALVQKQHPDWLAPRVEAAAQDQFEGAAEEWMAGTLKLGQALRPQGLWGFYNFPECYNYDFKSPNYTGRCPLNICAQNDQLGWLWGQSRALYPSIYLPAALEGTKKTQMFVQHRVAEAFRVAAGAGDPKLPVLPYMQLFYDMTNHFLPAEELEHSLGESAAQGAAGVVLWVSWLSTSTKESCQAIKEYVDTTLGPSILNVTSGARLCSQVLCSGHGRCARRPSYPKARLILNSTSFSIKPTPGGGPLTLQGALSLEDRLRMAVEFECRCYRGWRGTRCEQWGMW</sequence>
<comment type="function">
    <text evidence="1">May have a role in promoting tumor progression. May block the TGFB1-enhanced cell growth (By similarity).</text>
</comment>
<comment type="catalytic activity">
    <reaction>
        <text>Random hydrolysis of (1-&gt;4)-linkages between N-acetyl-beta-D-glucosamine and D-glucuronate residues in hyaluronate.</text>
        <dbReference type="EC" id="3.2.1.35"/>
    </reaction>
</comment>
<comment type="subcellular location">
    <subcellularLocation>
        <location evidence="1">Secreted</location>
    </subcellularLocation>
    <subcellularLocation>
        <location evidence="1">Lysosome</location>
    </subcellularLocation>
</comment>
<comment type="similarity">
    <text evidence="3">Belongs to the glycosyl hydrolase 56 family.</text>
</comment>
<comment type="sequence caution" evidence="3">
    <conflict type="frameshift">
        <sequence resource="EMBL-CDS" id="AAX08792"/>
    </conflict>
</comment>
<dbReference type="EC" id="3.2.1.35"/>
<dbReference type="EMBL" id="BT020775">
    <property type="protein sequence ID" value="AAX08792.1"/>
    <property type="status" value="ALT_FRAME"/>
    <property type="molecule type" value="mRNA"/>
</dbReference>
<dbReference type="EMBL" id="BT021035">
    <property type="protein sequence ID" value="AAX09052.1"/>
    <property type="molecule type" value="mRNA"/>
</dbReference>
<dbReference type="EMBL" id="BC102473">
    <property type="protein sequence ID" value="AAI02474.1"/>
    <property type="molecule type" value="mRNA"/>
</dbReference>
<dbReference type="RefSeq" id="NP_001017941.1">
    <property type="nucleotide sequence ID" value="NM_001017941.1"/>
</dbReference>
<dbReference type="SMR" id="Q5E985"/>
<dbReference type="FunCoup" id="Q5E985">
    <property type="interactions" value="214"/>
</dbReference>
<dbReference type="STRING" id="9913.ENSBTAP00000000611"/>
<dbReference type="BindingDB" id="Q5E985"/>
<dbReference type="ChEMBL" id="CHEMBL3833905"/>
<dbReference type="CAZy" id="GH56">
    <property type="family name" value="Glycoside Hydrolase Family 56"/>
</dbReference>
<dbReference type="GlyCosmos" id="Q5E985">
    <property type="glycosylation" value="4 sites, No reported glycans"/>
</dbReference>
<dbReference type="GlyGen" id="Q5E985">
    <property type="glycosylation" value="4 sites"/>
</dbReference>
<dbReference type="PaxDb" id="9913-ENSBTAP00000000611"/>
<dbReference type="GeneID" id="515397"/>
<dbReference type="KEGG" id="bta:515397"/>
<dbReference type="CTD" id="3373"/>
<dbReference type="eggNOG" id="ENOG502QTUU">
    <property type="taxonomic scope" value="Eukaryota"/>
</dbReference>
<dbReference type="HOGENOM" id="CLU_036366_2_1_1"/>
<dbReference type="InParanoid" id="Q5E985"/>
<dbReference type="OrthoDB" id="5796153at2759"/>
<dbReference type="BRENDA" id="3.2.1.35">
    <property type="organism ID" value="908"/>
</dbReference>
<dbReference type="Proteomes" id="UP000009136">
    <property type="component" value="Unplaced"/>
</dbReference>
<dbReference type="GO" id="GO:0031410">
    <property type="term" value="C:cytoplasmic vesicle"/>
    <property type="evidence" value="ECO:0000250"/>
    <property type="project" value="UniProtKB"/>
</dbReference>
<dbReference type="GO" id="GO:0005615">
    <property type="term" value="C:extracellular space"/>
    <property type="evidence" value="ECO:0000250"/>
    <property type="project" value="UniProtKB"/>
</dbReference>
<dbReference type="GO" id="GO:0036117">
    <property type="term" value="C:hyaluranon cable"/>
    <property type="evidence" value="ECO:0000250"/>
    <property type="project" value="UniProtKB"/>
</dbReference>
<dbReference type="GO" id="GO:0005764">
    <property type="term" value="C:lysosome"/>
    <property type="evidence" value="ECO:0000250"/>
    <property type="project" value="UniProtKB"/>
</dbReference>
<dbReference type="GO" id="GO:0004415">
    <property type="term" value="F:hyalurononglucosaminidase activity"/>
    <property type="evidence" value="ECO:0000250"/>
    <property type="project" value="UniProtKB"/>
</dbReference>
<dbReference type="GO" id="GO:0005975">
    <property type="term" value="P:carbohydrate metabolic process"/>
    <property type="evidence" value="ECO:0007669"/>
    <property type="project" value="InterPro"/>
</dbReference>
<dbReference type="GO" id="GO:0051216">
    <property type="term" value="P:cartilage development"/>
    <property type="evidence" value="ECO:0000250"/>
    <property type="project" value="UniProtKB"/>
</dbReference>
<dbReference type="GO" id="GO:0071347">
    <property type="term" value="P:cellular response to interleukin-1"/>
    <property type="evidence" value="ECO:0000250"/>
    <property type="project" value="UniProtKB"/>
</dbReference>
<dbReference type="GO" id="GO:0071467">
    <property type="term" value="P:cellular response to pH"/>
    <property type="evidence" value="ECO:0000250"/>
    <property type="project" value="UniProtKB"/>
</dbReference>
<dbReference type="GO" id="GO:0036120">
    <property type="term" value="P:cellular response to platelet-derived growth factor stimulus"/>
    <property type="evidence" value="ECO:0000250"/>
    <property type="project" value="UniProtKB"/>
</dbReference>
<dbReference type="GO" id="GO:0071493">
    <property type="term" value="P:cellular response to UV-B"/>
    <property type="evidence" value="ECO:0000250"/>
    <property type="project" value="UniProtKB"/>
</dbReference>
<dbReference type="GO" id="GO:0030214">
    <property type="term" value="P:hyaluronan catabolic process"/>
    <property type="evidence" value="ECO:0000250"/>
    <property type="project" value="UniProtKB"/>
</dbReference>
<dbReference type="GO" id="GO:0030212">
    <property type="term" value="P:hyaluronan metabolic process"/>
    <property type="evidence" value="ECO:0000250"/>
    <property type="project" value="UniProtKB"/>
</dbReference>
<dbReference type="GO" id="GO:0006954">
    <property type="term" value="P:inflammatory response"/>
    <property type="evidence" value="ECO:0000250"/>
    <property type="project" value="UniProtKB"/>
</dbReference>
<dbReference type="GO" id="GO:0030308">
    <property type="term" value="P:negative regulation of cell growth"/>
    <property type="evidence" value="ECO:0000250"/>
    <property type="project" value="UniProtKB"/>
</dbReference>
<dbReference type="GO" id="GO:0045766">
    <property type="term" value="P:positive regulation of angiogenesis"/>
    <property type="evidence" value="ECO:0000250"/>
    <property type="project" value="UniProtKB"/>
</dbReference>
<dbReference type="GO" id="GO:0045785">
    <property type="term" value="P:positive regulation of cell adhesion"/>
    <property type="evidence" value="ECO:0000250"/>
    <property type="project" value="UniProtKB"/>
</dbReference>
<dbReference type="GO" id="GO:0030307">
    <property type="term" value="P:positive regulation of cell growth"/>
    <property type="evidence" value="ECO:0000250"/>
    <property type="project" value="UniProtKB"/>
</dbReference>
<dbReference type="GO" id="GO:1900106">
    <property type="term" value="P:positive regulation of hyaluranon cable assembly"/>
    <property type="evidence" value="ECO:0000250"/>
    <property type="project" value="UniProtKB"/>
</dbReference>
<dbReference type="GO" id="GO:0046677">
    <property type="term" value="P:response to antibiotic"/>
    <property type="evidence" value="ECO:0000250"/>
    <property type="project" value="UniProtKB"/>
</dbReference>
<dbReference type="GO" id="GO:0000302">
    <property type="term" value="P:response to reactive oxygen species"/>
    <property type="evidence" value="ECO:0000250"/>
    <property type="project" value="UniProtKB"/>
</dbReference>
<dbReference type="GO" id="GO:0009615">
    <property type="term" value="P:response to virus"/>
    <property type="evidence" value="ECO:0000250"/>
    <property type="project" value="UniProtKB"/>
</dbReference>
<dbReference type="FunFam" id="3.20.20.70:FF:000065">
    <property type="entry name" value="Hyaluronidase"/>
    <property type="match status" value="1"/>
</dbReference>
<dbReference type="Gene3D" id="3.20.20.70">
    <property type="entry name" value="Aldolase class I"/>
    <property type="match status" value="1"/>
</dbReference>
<dbReference type="InterPro" id="IPR013785">
    <property type="entry name" value="Aldolase_TIM"/>
</dbReference>
<dbReference type="InterPro" id="IPR017853">
    <property type="entry name" value="Glycoside_hydrolase_SF"/>
</dbReference>
<dbReference type="InterPro" id="IPR018155">
    <property type="entry name" value="Hyaluronidase"/>
</dbReference>
<dbReference type="PANTHER" id="PTHR11769">
    <property type="entry name" value="HYALURONIDASE"/>
    <property type="match status" value="1"/>
</dbReference>
<dbReference type="PANTHER" id="PTHR11769:SF23">
    <property type="entry name" value="HYALURONIDASE-1"/>
    <property type="match status" value="1"/>
</dbReference>
<dbReference type="Pfam" id="PF01630">
    <property type="entry name" value="Glyco_hydro_56"/>
    <property type="match status" value="1"/>
</dbReference>
<dbReference type="PIRSF" id="PIRSF038193">
    <property type="entry name" value="Hyaluronidase"/>
    <property type="match status" value="1"/>
</dbReference>
<dbReference type="PRINTS" id="PR00846">
    <property type="entry name" value="GLHYDRLASE56"/>
</dbReference>
<dbReference type="SUPFAM" id="SSF51445">
    <property type="entry name" value="(Trans)glycosidases"/>
    <property type="match status" value="1"/>
</dbReference>
<dbReference type="PROSITE" id="PS00022">
    <property type="entry name" value="EGF_1"/>
    <property type="match status" value="1"/>
</dbReference>
<dbReference type="PROSITE" id="PS01186">
    <property type="entry name" value="EGF_2"/>
    <property type="match status" value="1"/>
</dbReference>
<protein>
    <recommendedName>
        <fullName>Hyaluronidase-1</fullName>
        <shortName>Hyal-1</shortName>
        <ecNumber>3.2.1.35</ecNumber>
    </recommendedName>
    <alternativeName>
        <fullName>Hyaluronoglucosaminidase-1</fullName>
    </alternativeName>
</protein>
<accession>Q5E985</accession>
<accession>Q3T0A8</accession>
<accession>Q5E9Z4</accession>
<evidence type="ECO:0000250" key="1"/>
<evidence type="ECO:0000255" key="2"/>
<evidence type="ECO:0000305" key="3"/>